<dbReference type="EC" id="1.14.99.46" evidence="1"/>
<dbReference type="EMBL" id="CP000948">
    <property type="protein sequence ID" value="ACB02213.1"/>
    <property type="molecule type" value="Genomic_DNA"/>
</dbReference>
<dbReference type="SMR" id="B1X9D3"/>
<dbReference type="KEGG" id="ecd:ECDH10B_1084"/>
<dbReference type="HOGENOM" id="CLU_027853_1_1_6"/>
<dbReference type="GO" id="GO:0008726">
    <property type="term" value="F:alkanesulfonate monooxygenase activity"/>
    <property type="evidence" value="ECO:0007669"/>
    <property type="project" value="TreeGrafter"/>
</dbReference>
<dbReference type="GO" id="GO:0052614">
    <property type="term" value="F:uracil oxygenase activity"/>
    <property type="evidence" value="ECO:0007669"/>
    <property type="project" value="UniProtKB-EC"/>
</dbReference>
<dbReference type="GO" id="GO:0046306">
    <property type="term" value="P:alkanesulfonate catabolic process"/>
    <property type="evidence" value="ECO:0007669"/>
    <property type="project" value="TreeGrafter"/>
</dbReference>
<dbReference type="GO" id="GO:0019740">
    <property type="term" value="P:nitrogen utilization"/>
    <property type="evidence" value="ECO:0007669"/>
    <property type="project" value="UniProtKB-UniRule"/>
</dbReference>
<dbReference type="GO" id="GO:0006212">
    <property type="term" value="P:uracil catabolic process"/>
    <property type="evidence" value="ECO:0007669"/>
    <property type="project" value="UniProtKB-UniRule"/>
</dbReference>
<dbReference type="CDD" id="cd01094">
    <property type="entry name" value="Alkanesulfonate_monoxygenase"/>
    <property type="match status" value="1"/>
</dbReference>
<dbReference type="FunFam" id="3.20.20.30:FF:000003">
    <property type="entry name" value="Pyrimidine monooxygenase RutA"/>
    <property type="match status" value="1"/>
</dbReference>
<dbReference type="Gene3D" id="3.20.20.30">
    <property type="entry name" value="Luciferase-like domain"/>
    <property type="match status" value="1"/>
</dbReference>
<dbReference type="HAMAP" id="MF_01699">
    <property type="entry name" value="RutA"/>
    <property type="match status" value="1"/>
</dbReference>
<dbReference type="InterPro" id="IPR011251">
    <property type="entry name" value="Luciferase-like_dom"/>
</dbReference>
<dbReference type="InterPro" id="IPR036661">
    <property type="entry name" value="Luciferase-like_sf"/>
</dbReference>
<dbReference type="InterPro" id="IPR019914">
    <property type="entry name" value="Pyrimidine_monooxygenase_RutA"/>
</dbReference>
<dbReference type="InterPro" id="IPR050172">
    <property type="entry name" value="SsuD_RutA_monooxygenase"/>
</dbReference>
<dbReference type="NCBIfam" id="TIGR03612">
    <property type="entry name" value="RutA"/>
    <property type="match status" value="1"/>
</dbReference>
<dbReference type="PANTHER" id="PTHR42847">
    <property type="entry name" value="ALKANESULFONATE MONOOXYGENASE"/>
    <property type="match status" value="1"/>
</dbReference>
<dbReference type="PANTHER" id="PTHR42847:SF4">
    <property type="entry name" value="ALKANESULFONATE MONOOXYGENASE-RELATED"/>
    <property type="match status" value="1"/>
</dbReference>
<dbReference type="Pfam" id="PF00296">
    <property type="entry name" value="Bac_luciferase"/>
    <property type="match status" value="1"/>
</dbReference>
<dbReference type="SUPFAM" id="SSF51679">
    <property type="entry name" value="Bacterial luciferase-like"/>
    <property type="match status" value="1"/>
</dbReference>
<reference key="1">
    <citation type="journal article" date="2008" name="J. Bacteriol.">
        <title>The complete genome sequence of Escherichia coli DH10B: insights into the biology of a laboratory workhorse.</title>
        <authorList>
            <person name="Durfee T."/>
            <person name="Nelson R."/>
            <person name="Baldwin S."/>
            <person name="Plunkett G. III"/>
            <person name="Burland V."/>
            <person name="Mau B."/>
            <person name="Petrosino J.F."/>
            <person name="Qin X."/>
            <person name="Muzny D.M."/>
            <person name="Ayele M."/>
            <person name="Gibbs R.A."/>
            <person name="Csorgo B."/>
            <person name="Posfai G."/>
            <person name="Weinstock G.M."/>
            <person name="Blattner F.R."/>
        </authorList>
    </citation>
    <scope>NUCLEOTIDE SEQUENCE [LARGE SCALE GENOMIC DNA]</scope>
    <source>
        <strain>K12 / DH10B</strain>
    </source>
</reference>
<gene>
    <name evidence="1" type="primary">rutA</name>
    <name type="ordered locus">ECDH10B_1084</name>
</gene>
<organism>
    <name type="scientific">Escherichia coli (strain K12 / DH10B)</name>
    <dbReference type="NCBI Taxonomy" id="316385"/>
    <lineage>
        <taxon>Bacteria</taxon>
        <taxon>Pseudomonadati</taxon>
        <taxon>Pseudomonadota</taxon>
        <taxon>Gammaproteobacteria</taxon>
        <taxon>Enterobacterales</taxon>
        <taxon>Enterobacteriaceae</taxon>
        <taxon>Escherichia</taxon>
    </lineage>
</organism>
<keyword id="KW-0285">Flavoprotein</keyword>
<keyword id="KW-0288">FMN</keyword>
<keyword id="KW-0503">Monooxygenase</keyword>
<keyword id="KW-0521">NADP</keyword>
<keyword id="KW-0560">Oxidoreductase</keyword>
<sequence length="382" mass="42219">MQDAAPRLTFTLRDEERLMMKIGVFVPIGNNGWLISTHAPQYMPTFELNKAIVQKAEHYHFDFALSMIKLRGFGGKTEFWDHNLESFTLMAGLAAVTSRIQIYATAATLTLPPAIVARMAATIDSISGGRFGVNLVTGWQKPEYEQMGIWPGDDYFSRRYDYLTEYVQVLRDLWGTGKSDFKGDFFTMNDCRVSPQPSVPMKVICAGQSDAGMAFSARYADFNFCFGKGVNTPTAFAPTAARMKQAAEQTGRDVGSYVLFMVIADETDDAARAKWEHYKAGADEEALSWLTEQSQKDTRSGTDTNVRQMADPTSAVNINMGTLVGSYASVARMLDEVASVPGAEGVLLTFDDFLSGIETFGERIQPLMQCRAHLPALTQEVA</sequence>
<accession>B1X9D3</accession>
<protein>
    <recommendedName>
        <fullName evidence="1">Pyrimidine monooxygenase RutA</fullName>
        <ecNumber evidence="1">1.14.99.46</ecNumber>
    </recommendedName>
</protein>
<evidence type="ECO:0000255" key="1">
    <source>
        <dbReference type="HAMAP-Rule" id="MF_01699"/>
    </source>
</evidence>
<comment type="function">
    <text evidence="1">Catalyzes the pyrimidine ring opening between N-3 and C-4 by an unusual flavin hydroperoxide-catalyzed mechanism, adding oxygen atoms in the process to yield ureidoacrylate peracid, that immediately reacts with FMN forming ureidoacrylate and FMN-N(5)-oxide. The FMN-N(5)-oxide reacts spontaneously with NADH to produce FMN. Requires the flavin reductase RutF to regenerate FMN in vivo.</text>
</comment>
<comment type="catalytic activity">
    <reaction evidence="1">
        <text>uracil + FMNH2 + NADH + O2 = (Z)-3-ureidoacrylate + FMN + NAD(+) + H2O + H(+)</text>
        <dbReference type="Rhea" id="RHEA:31587"/>
        <dbReference type="ChEBI" id="CHEBI:15377"/>
        <dbReference type="ChEBI" id="CHEBI:15378"/>
        <dbReference type="ChEBI" id="CHEBI:15379"/>
        <dbReference type="ChEBI" id="CHEBI:17568"/>
        <dbReference type="ChEBI" id="CHEBI:57540"/>
        <dbReference type="ChEBI" id="CHEBI:57618"/>
        <dbReference type="ChEBI" id="CHEBI:57945"/>
        <dbReference type="ChEBI" id="CHEBI:58210"/>
        <dbReference type="ChEBI" id="CHEBI:59891"/>
        <dbReference type="EC" id="1.14.99.46"/>
    </reaction>
</comment>
<comment type="catalytic activity">
    <reaction evidence="1">
        <text>thymine + FMNH2 + NADH + O2 = (Z)-2-methylureidoacrylate + FMN + NAD(+) + H2O + H(+)</text>
        <dbReference type="Rhea" id="RHEA:31599"/>
        <dbReference type="ChEBI" id="CHEBI:15377"/>
        <dbReference type="ChEBI" id="CHEBI:15378"/>
        <dbReference type="ChEBI" id="CHEBI:15379"/>
        <dbReference type="ChEBI" id="CHEBI:17821"/>
        <dbReference type="ChEBI" id="CHEBI:57540"/>
        <dbReference type="ChEBI" id="CHEBI:57618"/>
        <dbReference type="ChEBI" id="CHEBI:57945"/>
        <dbReference type="ChEBI" id="CHEBI:58210"/>
        <dbReference type="ChEBI" id="CHEBI:143783"/>
        <dbReference type="EC" id="1.14.99.46"/>
    </reaction>
</comment>
<comment type="induction">
    <text evidence="1">Up-regulated by the nitrogen regulatory protein C (NtrC also called GlnG) and repressed by RutR.</text>
</comment>
<comment type="similarity">
    <text evidence="1">Belongs to the NtaA/SnaA/DszA monooxygenase family. RutA subfamily.</text>
</comment>
<proteinExistence type="inferred from homology"/>
<name>RUTA_ECODH</name>
<feature type="chain" id="PRO_0000402599" description="Pyrimidine monooxygenase RutA">
    <location>
        <begin position="1"/>
        <end position="382"/>
    </location>
</feature>
<feature type="binding site" evidence="1">
    <location>
        <begin position="68"/>
        <end position="69"/>
    </location>
    <ligand>
        <name>FMN</name>
        <dbReference type="ChEBI" id="CHEBI:58210"/>
    </ligand>
</feature>
<feature type="binding site" evidence="1">
    <location>
        <position position="134"/>
    </location>
    <ligand>
        <name>FMN</name>
        <dbReference type="ChEBI" id="CHEBI:58210"/>
    </ligand>
</feature>
<feature type="binding site" evidence="1">
    <location>
        <position position="143"/>
    </location>
    <ligand>
        <name>FMN</name>
        <dbReference type="ChEBI" id="CHEBI:58210"/>
    </ligand>
</feature>
<feature type="binding site" evidence="1">
    <location>
        <begin position="159"/>
        <end position="160"/>
    </location>
    <ligand>
        <name>FMN</name>
        <dbReference type="ChEBI" id="CHEBI:58210"/>
    </ligand>
</feature>
<feature type="binding site" evidence="1">
    <location>
        <position position="209"/>
    </location>
    <ligand>
        <name>FMN</name>
        <dbReference type="ChEBI" id="CHEBI:58210"/>
    </ligand>
</feature>